<name>CLPS_ECOK1</name>
<feature type="chain" id="PRO_0000300705" description="ATP-dependent Clp protease adapter protein ClpS">
    <location>
        <begin position="1"/>
        <end position="106"/>
    </location>
</feature>
<evidence type="ECO:0000255" key="1">
    <source>
        <dbReference type="HAMAP-Rule" id="MF_00302"/>
    </source>
</evidence>
<reference key="1">
    <citation type="journal article" date="2007" name="J. Bacteriol.">
        <title>The genome sequence of avian pathogenic Escherichia coli strain O1:K1:H7 shares strong similarities with human extraintestinal pathogenic E. coli genomes.</title>
        <authorList>
            <person name="Johnson T.J."/>
            <person name="Kariyawasam S."/>
            <person name="Wannemuehler Y."/>
            <person name="Mangiamele P."/>
            <person name="Johnson S.J."/>
            <person name="Doetkott C."/>
            <person name="Skyberg J.A."/>
            <person name="Lynne A.M."/>
            <person name="Johnson J.R."/>
            <person name="Nolan L.K."/>
        </authorList>
    </citation>
    <scope>NUCLEOTIDE SEQUENCE [LARGE SCALE GENOMIC DNA]</scope>
</reference>
<organism>
    <name type="scientific">Escherichia coli O1:K1 / APEC</name>
    <dbReference type="NCBI Taxonomy" id="405955"/>
    <lineage>
        <taxon>Bacteria</taxon>
        <taxon>Pseudomonadati</taxon>
        <taxon>Pseudomonadota</taxon>
        <taxon>Gammaproteobacteria</taxon>
        <taxon>Enterobacterales</taxon>
        <taxon>Enterobacteriaceae</taxon>
        <taxon>Escherichia</taxon>
    </lineage>
</organism>
<proteinExistence type="inferred from homology"/>
<gene>
    <name evidence="1" type="primary">clpS</name>
    <name type="ordered locus">Ecok1_07640</name>
    <name type="ORF">APECO1_1214</name>
</gene>
<sequence length="106" mass="12179">MGKTNDWLDFDQLAEEKVRDALKPPSMYKVILVNDDYTPMEFVIDVLQKFFSYDVERATQLMLAVHYQGKAICGVFTAEVAETKVAMVNKYARENEHPLLCTLEKA</sequence>
<comment type="function">
    <text evidence="1">Involved in the modulation of the specificity of the ClpAP-mediated ATP-dependent protein degradation.</text>
</comment>
<comment type="subunit">
    <text evidence="1">Binds to the N-terminal domain of the chaperone ClpA.</text>
</comment>
<comment type="similarity">
    <text evidence="1">Belongs to the ClpS family.</text>
</comment>
<keyword id="KW-1185">Reference proteome</keyword>
<dbReference type="EMBL" id="CP000468">
    <property type="protein sequence ID" value="ABJ00258.1"/>
    <property type="molecule type" value="Genomic_DNA"/>
</dbReference>
<dbReference type="RefSeq" id="WP_000520781.1">
    <property type="nucleotide sequence ID" value="NZ_CADILS010000017.1"/>
</dbReference>
<dbReference type="SMR" id="A1A9B8"/>
<dbReference type="GeneID" id="86863397"/>
<dbReference type="KEGG" id="ecv:APECO1_1214"/>
<dbReference type="HOGENOM" id="CLU_134358_2_1_6"/>
<dbReference type="Proteomes" id="UP000008216">
    <property type="component" value="Chromosome"/>
</dbReference>
<dbReference type="GO" id="GO:0030163">
    <property type="term" value="P:protein catabolic process"/>
    <property type="evidence" value="ECO:0007669"/>
    <property type="project" value="InterPro"/>
</dbReference>
<dbReference type="GO" id="GO:0006508">
    <property type="term" value="P:proteolysis"/>
    <property type="evidence" value="ECO:0007669"/>
    <property type="project" value="UniProtKB-UniRule"/>
</dbReference>
<dbReference type="FunFam" id="3.30.1390.10:FF:000002">
    <property type="entry name" value="ATP-dependent Clp protease adapter protein ClpS"/>
    <property type="match status" value="1"/>
</dbReference>
<dbReference type="Gene3D" id="3.30.1390.10">
    <property type="match status" value="1"/>
</dbReference>
<dbReference type="HAMAP" id="MF_00302">
    <property type="entry name" value="ClpS"/>
    <property type="match status" value="1"/>
</dbReference>
<dbReference type="InterPro" id="IPR022935">
    <property type="entry name" value="ClpS"/>
</dbReference>
<dbReference type="InterPro" id="IPR003769">
    <property type="entry name" value="ClpS_core"/>
</dbReference>
<dbReference type="InterPro" id="IPR014719">
    <property type="entry name" value="Ribosomal_bL12_C/ClpS-like"/>
</dbReference>
<dbReference type="NCBIfam" id="NF000670">
    <property type="entry name" value="PRK00033.1-3"/>
    <property type="match status" value="1"/>
</dbReference>
<dbReference type="NCBIfam" id="NF000672">
    <property type="entry name" value="PRK00033.1-5"/>
    <property type="match status" value="1"/>
</dbReference>
<dbReference type="PANTHER" id="PTHR33473:SF19">
    <property type="entry name" value="ATP-DEPENDENT CLP PROTEASE ADAPTER PROTEIN CLPS"/>
    <property type="match status" value="1"/>
</dbReference>
<dbReference type="PANTHER" id="PTHR33473">
    <property type="entry name" value="ATP-DEPENDENT CLP PROTEASE ADAPTER PROTEIN CLPS1, CHLOROPLASTIC"/>
    <property type="match status" value="1"/>
</dbReference>
<dbReference type="Pfam" id="PF02617">
    <property type="entry name" value="ClpS"/>
    <property type="match status" value="1"/>
</dbReference>
<dbReference type="SUPFAM" id="SSF54736">
    <property type="entry name" value="ClpS-like"/>
    <property type="match status" value="1"/>
</dbReference>
<protein>
    <recommendedName>
        <fullName evidence="1">ATP-dependent Clp protease adapter protein ClpS</fullName>
    </recommendedName>
</protein>
<accession>A1A9B8</accession>